<name>PUR7_STAAN</name>
<organism>
    <name type="scientific">Staphylococcus aureus (strain N315)</name>
    <dbReference type="NCBI Taxonomy" id="158879"/>
    <lineage>
        <taxon>Bacteria</taxon>
        <taxon>Bacillati</taxon>
        <taxon>Bacillota</taxon>
        <taxon>Bacilli</taxon>
        <taxon>Bacillales</taxon>
        <taxon>Staphylococcaceae</taxon>
        <taxon>Staphylococcus</taxon>
    </lineage>
</organism>
<comment type="catalytic activity">
    <reaction evidence="1">
        <text>5-amino-1-(5-phospho-D-ribosyl)imidazole-4-carboxylate + L-aspartate + ATP = (2S)-2-[5-amino-1-(5-phospho-beta-D-ribosyl)imidazole-4-carboxamido]succinate + ADP + phosphate + 2 H(+)</text>
        <dbReference type="Rhea" id="RHEA:22628"/>
        <dbReference type="ChEBI" id="CHEBI:15378"/>
        <dbReference type="ChEBI" id="CHEBI:29991"/>
        <dbReference type="ChEBI" id="CHEBI:30616"/>
        <dbReference type="ChEBI" id="CHEBI:43474"/>
        <dbReference type="ChEBI" id="CHEBI:58443"/>
        <dbReference type="ChEBI" id="CHEBI:77657"/>
        <dbReference type="ChEBI" id="CHEBI:456216"/>
        <dbReference type="EC" id="6.3.2.6"/>
    </reaction>
</comment>
<comment type="pathway">
    <text evidence="1">Purine metabolism; IMP biosynthesis via de novo pathway; 5-amino-1-(5-phospho-D-ribosyl)imidazole-4-carboxamide from 5-amino-1-(5-phospho-D-ribosyl)imidazole-4-carboxylate: step 1/2.</text>
</comment>
<comment type="similarity">
    <text evidence="1">Belongs to the SAICAR synthetase family.</text>
</comment>
<reference key="1">
    <citation type="journal article" date="2001" name="Lancet">
        <title>Whole genome sequencing of meticillin-resistant Staphylococcus aureus.</title>
        <authorList>
            <person name="Kuroda M."/>
            <person name="Ohta T."/>
            <person name="Uchiyama I."/>
            <person name="Baba T."/>
            <person name="Yuzawa H."/>
            <person name="Kobayashi I."/>
            <person name="Cui L."/>
            <person name="Oguchi A."/>
            <person name="Aoki K."/>
            <person name="Nagai Y."/>
            <person name="Lian J.-Q."/>
            <person name="Ito T."/>
            <person name="Kanamori M."/>
            <person name="Matsumaru H."/>
            <person name="Maruyama A."/>
            <person name="Murakami H."/>
            <person name="Hosoyama A."/>
            <person name="Mizutani-Ui Y."/>
            <person name="Takahashi N.K."/>
            <person name="Sawano T."/>
            <person name="Inoue R."/>
            <person name="Kaito C."/>
            <person name="Sekimizu K."/>
            <person name="Hirakawa H."/>
            <person name="Kuhara S."/>
            <person name="Goto S."/>
            <person name="Yabuzaki J."/>
            <person name="Kanehisa M."/>
            <person name="Yamashita A."/>
            <person name="Oshima K."/>
            <person name="Furuya K."/>
            <person name="Yoshino C."/>
            <person name="Shiba T."/>
            <person name="Hattori M."/>
            <person name="Ogasawara N."/>
            <person name="Hayashi H."/>
            <person name="Hiramatsu K."/>
        </authorList>
    </citation>
    <scope>NUCLEOTIDE SEQUENCE [LARGE SCALE GENOMIC DNA]</scope>
    <source>
        <strain>N315</strain>
    </source>
</reference>
<reference key="2">
    <citation type="journal article" date="2005" name="J. Microbiol. Methods">
        <title>Correlation of proteomic and transcriptomic profiles of Staphylococcus aureus during the post-exponential phase of growth.</title>
        <authorList>
            <person name="Scherl A."/>
            <person name="Francois P."/>
            <person name="Bento M."/>
            <person name="Deshusses J.M."/>
            <person name="Charbonnier Y."/>
            <person name="Converset V."/>
            <person name="Huyghe A."/>
            <person name="Walter N."/>
            <person name="Hoogland C."/>
            <person name="Appel R.D."/>
            <person name="Sanchez J.-C."/>
            <person name="Zimmermann-Ivol C.G."/>
            <person name="Corthals G.L."/>
            <person name="Hochstrasser D.F."/>
            <person name="Schrenzel J."/>
        </authorList>
    </citation>
    <scope>IDENTIFICATION BY MASS SPECTROMETRY</scope>
    <source>
        <strain>N315</strain>
    </source>
</reference>
<reference key="3">
    <citation type="submission" date="2007-10" db="UniProtKB">
        <title>Shotgun proteomic analysis of total and membrane protein extracts of S. aureus strain N315.</title>
        <authorList>
            <person name="Vaezzadeh A.R."/>
            <person name="Deshusses J."/>
            <person name="Lescuyer P."/>
            <person name="Hochstrasser D.F."/>
        </authorList>
    </citation>
    <scope>IDENTIFICATION BY MASS SPECTROMETRY [LARGE SCALE ANALYSIS]</scope>
    <source>
        <strain>N315</strain>
    </source>
</reference>
<dbReference type="EC" id="6.3.2.6" evidence="1"/>
<dbReference type="EMBL" id="BA000018">
    <property type="protein sequence ID" value="BAB42163.1"/>
    <property type="molecule type" value="Genomic_DNA"/>
</dbReference>
<dbReference type="PIR" id="H89875">
    <property type="entry name" value="H89875"/>
</dbReference>
<dbReference type="RefSeq" id="WP_000174053.1">
    <property type="nucleotide sequence ID" value="NC_002745.2"/>
</dbReference>
<dbReference type="SMR" id="P99064"/>
<dbReference type="EnsemblBacteria" id="BAB42163">
    <property type="protein sequence ID" value="BAB42163"/>
    <property type="gene ID" value="BAB42163"/>
</dbReference>
<dbReference type="KEGG" id="sau:SA0918"/>
<dbReference type="HOGENOM" id="CLU_061495_2_0_9"/>
<dbReference type="UniPathway" id="UPA00074">
    <property type="reaction ID" value="UER00131"/>
</dbReference>
<dbReference type="GO" id="GO:0005524">
    <property type="term" value="F:ATP binding"/>
    <property type="evidence" value="ECO:0007669"/>
    <property type="project" value="UniProtKB-KW"/>
</dbReference>
<dbReference type="GO" id="GO:0004639">
    <property type="term" value="F:phosphoribosylaminoimidazolesuccinocarboxamide synthase activity"/>
    <property type="evidence" value="ECO:0007669"/>
    <property type="project" value="UniProtKB-UniRule"/>
</dbReference>
<dbReference type="GO" id="GO:0006189">
    <property type="term" value="P:'de novo' IMP biosynthetic process"/>
    <property type="evidence" value="ECO:0007669"/>
    <property type="project" value="UniProtKB-UniRule"/>
</dbReference>
<dbReference type="GO" id="GO:0009236">
    <property type="term" value="P:cobalamin biosynthetic process"/>
    <property type="evidence" value="ECO:0007669"/>
    <property type="project" value="InterPro"/>
</dbReference>
<dbReference type="CDD" id="cd01415">
    <property type="entry name" value="SAICAR_synt_PurC"/>
    <property type="match status" value="1"/>
</dbReference>
<dbReference type="FunFam" id="3.30.200.20:FF:000189">
    <property type="entry name" value="Phosphoribosylaminoimidazole-succinocarboxamide synthase"/>
    <property type="match status" value="1"/>
</dbReference>
<dbReference type="FunFam" id="3.30.470.20:FF:000006">
    <property type="entry name" value="Phosphoribosylaminoimidazole-succinocarboxamide synthase"/>
    <property type="match status" value="1"/>
</dbReference>
<dbReference type="Gene3D" id="3.30.470.20">
    <property type="entry name" value="ATP-grasp fold, B domain"/>
    <property type="match status" value="1"/>
</dbReference>
<dbReference type="Gene3D" id="3.30.200.20">
    <property type="entry name" value="Phosphorylase Kinase, domain 1"/>
    <property type="match status" value="1"/>
</dbReference>
<dbReference type="HAMAP" id="MF_00137">
    <property type="entry name" value="SAICAR_synth"/>
    <property type="match status" value="1"/>
</dbReference>
<dbReference type="InterPro" id="IPR028923">
    <property type="entry name" value="SAICAR_synt/ADE2_N"/>
</dbReference>
<dbReference type="InterPro" id="IPR033934">
    <property type="entry name" value="SAICAR_synt_PurC"/>
</dbReference>
<dbReference type="InterPro" id="IPR001636">
    <property type="entry name" value="SAICAR_synth"/>
</dbReference>
<dbReference type="InterPro" id="IPR050089">
    <property type="entry name" value="SAICAR_synthetase"/>
</dbReference>
<dbReference type="InterPro" id="IPR018236">
    <property type="entry name" value="SAICAR_synthetase_CS"/>
</dbReference>
<dbReference type="NCBIfam" id="TIGR00081">
    <property type="entry name" value="purC"/>
    <property type="match status" value="1"/>
</dbReference>
<dbReference type="PANTHER" id="PTHR43599">
    <property type="entry name" value="MULTIFUNCTIONAL PROTEIN ADE2"/>
    <property type="match status" value="1"/>
</dbReference>
<dbReference type="PANTHER" id="PTHR43599:SF3">
    <property type="entry name" value="SI:DKEY-6E2.2"/>
    <property type="match status" value="1"/>
</dbReference>
<dbReference type="Pfam" id="PF01259">
    <property type="entry name" value="SAICAR_synt"/>
    <property type="match status" value="1"/>
</dbReference>
<dbReference type="SUPFAM" id="SSF56104">
    <property type="entry name" value="SAICAR synthase-like"/>
    <property type="match status" value="1"/>
</dbReference>
<dbReference type="PROSITE" id="PS01057">
    <property type="entry name" value="SAICAR_SYNTHETASE_1"/>
    <property type="match status" value="1"/>
</dbReference>
<dbReference type="PROSITE" id="PS01058">
    <property type="entry name" value="SAICAR_SYNTHETASE_2"/>
    <property type="match status" value="1"/>
</dbReference>
<gene>
    <name evidence="1" type="primary">purC</name>
    <name type="ordered locus">SA0918</name>
</gene>
<protein>
    <recommendedName>
        <fullName evidence="1">Phosphoribosylaminoimidazole-succinocarboxamide synthase</fullName>
        <ecNumber evidence="1">6.3.2.6</ecNumber>
    </recommendedName>
    <alternativeName>
        <fullName evidence="1">SAICAR synthetase</fullName>
    </alternativeName>
</protein>
<proteinExistence type="evidence at protein level"/>
<keyword id="KW-0067">ATP-binding</keyword>
<keyword id="KW-0436">Ligase</keyword>
<keyword id="KW-0547">Nucleotide-binding</keyword>
<keyword id="KW-0658">Purine biosynthesis</keyword>
<sequence length="234" mass="26693">MTLLYEGKAKRIFSTNQENELRVEYKDEVTAGNGAKKDTMAGKGRLNNQITSIIFKYLQENGIESHFIKQLSETEQLVKPVKIIPLEVVVRNIASGSITKRLGFENGEVFREPLVEFFYKNDALNDPLITDDHVKLLNIASDEDIEILKSKALKINNVLKQLMDAMNLKLVDFKIEFGKTETGQILLADEISPDTCRIWDKATNANFDKDVYRNNTGSLIETYQIFLNKLEDLK</sequence>
<accession>P99064</accession>
<accession>Q99V31</accession>
<evidence type="ECO:0000255" key="1">
    <source>
        <dbReference type="HAMAP-Rule" id="MF_00137"/>
    </source>
</evidence>
<feature type="chain" id="PRO_0000100871" description="Phosphoribosylaminoimidazole-succinocarboxamide synthase">
    <location>
        <begin position="1"/>
        <end position="234"/>
    </location>
</feature>